<evidence type="ECO:0000250" key="1">
    <source>
        <dbReference type="UniProtKB" id="P16913"/>
    </source>
</evidence>
<evidence type="ECO:0000255" key="2">
    <source>
        <dbReference type="PROSITE-ProRule" id="PRU00159"/>
    </source>
</evidence>
<evidence type="ECO:0000255" key="3">
    <source>
        <dbReference type="PROSITE-ProRule" id="PRU10027"/>
    </source>
</evidence>
<feature type="chain" id="PRO_0000086790" description="B1 kinase">
    <location>
        <begin position="1"/>
        <end position="300"/>
    </location>
</feature>
<feature type="domain" description="Protein kinase" evidence="2">
    <location>
        <begin position="16"/>
        <end position="282"/>
    </location>
</feature>
<feature type="active site" description="Proton acceptor" evidence="2 3">
    <location>
        <position position="147"/>
    </location>
</feature>
<feature type="binding site" evidence="2">
    <location>
        <begin position="22"/>
        <end position="30"/>
    </location>
    <ligand>
        <name>ATP</name>
        <dbReference type="ChEBI" id="CHEBI:30616"/>
    </ligand>
</feature>
<feature type="binding site" evidence="2">
    <location>
        <position position="45"/>
    </location>
    <ligand>
        <name>ATP</name>
        <dbReference type="ChEBI" id="CHEBI:30616"/>
    </ligand>
</feature>
<organism>
    <name type="scientific">Vaccinia virus (strain Ankara)</name>
    <name type="common">VACV</name>
    <dbReference type="NCBI Taxonomy" id="126794"/>
    <lineage>
        <taxon>Viruses</taxon>
        <taxon>Varidnaviria</taxon>
        <taxon>Bamfordvirae</taxon>
        <taxon>Nucleocytoviricota</taxon>
        <taxon>Pokkesviricetes</taxon>
        <taxon>Chitovirales</taxon>
        <taxon>Poxviridae</taxon>
        <taxon>Chordopoxvirinae</taxon>
        <taxon>Orthopoxvirus</taxon>
        <taxon>Vaccinia virus</taxon>
    </lineage>
</organism>
<name>PG187_VACCA</name>
<protein>
    <recommendedName>
        <fullName>B1 kinase</fullName>
    </recommendedName>
    <alternativeName>
        <fullName>Serine/threonine-protein kinase 1</fullName>
        <ecNumber>2.7.11.1</ecNumber>
    </alternativeName>
</protein>
<gene>
    <name type="primary">OPG187</name>
    <name type="synonym">VPK1</name>
    <name type="ordered locus">MVA167R</name>
    <name type="ordered locus">ACAM3000_MVA_167</name>
    <name type="ORF">B1R</name>
</gene>
<dbReference type="EC" id="2.7.11.1"/>
<dbReference type="EMBL" id="U94848">
    <property type="protein sequence ID" value="AAB96545.1"/>
    <property type="molecule type" value="Genomic_DNA"/>
</dbReference>
<dbReference type="EMBL" id="AY603355">
    <property type="protein sequence ID" value="AAT10565.1"/>
    <property type="molecule type" value="Genomic_DNA"/>
</dbReference>
<dbReference type="PIR" id="T37440">
    <property type="entry name" value="T37440"/>
</dbReference>
<dbReference type="SMR" id="O57252"/>
<dbReference type="Proteomes" id="UP000159908">
    <property type="component" value="Segment"/>
</dbReference>
<dbReference type="Proteomes" id="UP000172909">
    <property type="component" value="Segment"/>
</dbReference>
<dbReference type="GO" id="GO:0030430">
    <property type="term" value="C:host cell cytoplasm"/>
    <property type="evidence" value="ECO:0007669"/>
    <property type="project" value="UniProtKB-SubCell"/>
</dbReference>
<dbReference type="GO" id="GO:0044423">
    <property type="term" value="C:virion component"/>
    <property type="evidence" value="ECO:0007669"/>
    <property type="project" value="UniProtKB-KW"/>
</dbReference>
<dbReference type="GO" id="GO:0005524">
    <property type="term" value="F:ATP binding"/>
    <property type="evidence" value="ECO:0007669"/>
    <property type="project" value="UniProtKB-KW"/>
</dbReference>
<dbReference type="GO" id="GO:0106310">
    <property type="term" value="F:protein serine kinase activity"/>
    <property type="evidence" value="ECO:0007669"/>
    <property type="project" value="RHEA"/>
</dbReference>
<dbReference type="GO" id="GO:0004674">
    <property type="term" value="F:protein serine/threonine kinase activity"/>
    <property type="evidence" value="ECO:0007669"/>
    <property type="project" value="UniProtKB-KW"/>
</dbReference>
<dbReference type="FunFam" id="1.10.510.10:FF:000892">
    <property type="entry name" value="Ser/Thr kinase"/>
    <property type="match status" value="1"/>
</dbReference>
<dbReference type="Gene3D" id="1.10.510.10">
    <property type="entry name" value="Transferase(Phosphotransferase) domain 1"/>
    <property type="match status" value="1"/>
</dbReference>
<dbReference type="InterPro" id="IPR050235">
    <property type="entry name" value="CK1_Ser-Thr_kinase"/>
</dbReference>
<dbReference type="InterPro" id="IPR011009">
    <property type="entry name" value="Kinase-like_dom_sf"/>
</dbReference>
<dbReference type="InterPro" id="IPR000719">
    <property type="entry name" value="Prot_kinase_dom"/>
</dbReference>
<dbReference type="InterPro" id="IPR008271">
    <property type="entry name" value="Ser/Thr_kinase_AS"/>
</dbReference>
<dbReference type="PANTHER" id="PTHR11909">
    <property type="entry name" value="CASEIN KINASE-RELATED"/>
    <property type="match status" value="1"/>
</dbReference>
<dbReference type="Pfam" id="PF00069">
    <property type="entry name" value="Pkinase"/>
    <property type="match status" value="1"/>
</dbReference>
<dbReference type="SMART" id="SM00220">
    <property type="entry name" value="S_TKc"/>
    <property type="match status" value="1"/>
</dbReference>
<dbReference type="SUPFAM" id="SSF56112">
    <property type="entry name" value="Protein kinase-like (PK-like)"/>
    <property type="match status" value="1"/>
</dbReference>
<dbReference type="PROSITE" id="PS50011">
    <property type="entry name" value="PROTEIN_KINASE_DOM"/>
    <property type="match status" value="1"/>
</dbReference>
<dbReference type="PROSITE" id="PS00108">
    <property type="entry name" value="PROTEIN_KINASE_ST"/>
    <property type="match status" value="1"/>
</dbReference>
<organismHost>
    <name type="scientific">Homo sapiens</name>
    <name type="common">Human</name>
    <dbReference type="NCBI Taxonomy" id="9606"/>
</organismHost>
<comment type="function">
    <text evidence="1">Essential serine/threonine-protein kinase that plays different role in the viral life cycle. Phosphorylates the host small ribosomal protein RACK1 thereby customizing the ribosomes to a state optimal for viral mRNAs (which contain poly-A leaders) but not for host mRNAs. Facilitates viral DNA replication by inhibiting host BANF1, a cellular host defense responsive to foreign DNA. Phosphorylates host BANF1 on serine and threonine residues; this leads to BANF1 relocalization to the cytoplasm, loss of dimerization and impaired DNA binding activity. Indeed, BANF1 activity depends on its DNA-binding property which is blocked by VPK1-mediated phosphorylation. Required for viral intermediate genes expression, probably by inhibiting host BANF1. Modulates cellular responses via host JUN by two different mechanisms, either by direct phosphorylation or by modulation of upstream JIP1-MAPK complexes. Seems to participate in the accumulation/processing of late proteins and thus in virion maturation. In addition, inhibits B12 repressive activity on viral DNA replication via a phosphorylation-dependent mechanism.</text>
</comment>
<comment type="catalytic activity">
    <reaction evidence="1">
        <text>L-seryl-[protein] + ATP = O-phospho-L-seryl-[protein] + ADP + H(+)</text>
        <dbReference type="Rhea" id="RHEA:17989"/>
        <dbReference type="Rhea" id="RHEA-COMP:9863"/>
        <dbReference type="Rhea" id="RHEA-COMP:11604"/>
        <dbReference type="ChEBI" id="CHEBI:15378"/>
        <dbReference type="ChEBI" id="CHEBI:29999"/>
        <dbReference type="ChEBI" id="CHEBI:30616"/>
        <dbReference type="ChEBI" id="CHEBI:83421"/>
        <dbReference type="ChEBI" id="CHEBI:456216"/>
        <dbReference type="EC" id="2.7.11.1"/>
    </reaction>
</comment>
<comment type="catalytic activity">
    <reaction evidence="1">
        <text>L-threonyl-[protein] + ATP = O-phospho-L-threonyl-[protein] + ADP + H(+)</text>
        <dbReference type="Rhea" id="RHEA:46608"/>
        <dbReference type="Rhea" id="RHEA-COMP:11060"/>
        <dbReference type="Rhea" id="RHEA-COMP:11605"/>
        <dbReference type="ChEBI" id="CHEBI:15378"/>
        <dbReference type="ChEBI" id="CHEBI:30013"/>
        <dbReference type="ChEBI" id="CHEBI:30616"/>
        <dbReference type="ChEBI" id="CHEBI:61977"/>
        <dbReference type="ChEBI" id="CHEBI:456216"/>
        <dbReference type="EC" id="2.7.11.1"/>
    </reaction>
</comment>
<comment type="cofactor">
    <cofactor evidence="1">
        <name>Mg(2+)</name>
        <dbReference type="ChEBI" id="CHEBI:18420"/>
    </cofactor>
</comment>
<comment type="subunit">
    <text evidence="1">Interacts with host JIP1; this interaction increases the amount of MAPK bound to JIP1 and subsequently increases the activity of transcription factors, such as JUN, that respond to these complexes. Interacts with protein OPG198; this interaction inhibits the repressive activity of OPG198 pseudokinase on viral replication factory formation.</text>
</comment>
<comment type="subcellular location">
    <subcellularLocation>
        <location evidence="1">Virion</location>
    </subcellularLocation>
    <subcellularLocation>
        <location evidence="1">Host cytoplasm</location>
    </subcellularLocation>
    <text evidence="1">Localizes in cytoplasmic viral factories and is a minor component of the virion.</text>
</comment>
<comment type="induction">
    <text>Expressed in the early phase of the viral replicative cycle.</text>
</comment>
<comment type="PTM">
    <text evidence="1">Autophosphorylated.</text>
</comment>
<comment type="similarity">
    <text evidence="2">Belongs to the protein kinase superfamily. Ser/Thr protein kinase family. Poxviruses subfamily.</text>
</comment>
<proteinExistence type="evidence at transcript level"/>
<reference key="1">
    <citation type="journal article" date="1998" name="Virology">
        <title>The complete genomic sequence of the modified vaccinia Ankara strain: comparison with other orthopoxviruses.</title>
        <authorList>
            <person name="Antoine G."/>
            <person name="Scheiflinger F."/>
            <person name="Dorner F."/>
            <person name="Falkner F.G."/>
        </authorList>
    </citation>
    <scope>NUCLEOTIDE SEQUENCE [LARGE SCALE GENOMIC DNA]</scope>
</reference>
<reference key="2">
    <citation type="submission" date="2004-04" db="EMBL/GenBank/DDBJ databases">
        <authorList>
            <person name="Esposito J.J."/>
            <person name="Frace M."/>
            <person name="Sammons S.A."/>
            <person name="Olsen-Rasmussen M.S."/>
            <person name="Osborne J."/>
            <person name="Khristova M."/>
            <person name="Wohlhueter R.M."/>
        </authorList>
    </citation>
    <scope>NUCLEOTIDE SEQUENCE [LARGE SCALE GENOMIC DNA]</scope>
    <source>
        <strain>Isolate Acambis 3000</strain>
    </source>
</reference>
<accession>O57252</accession>
<sequence length="300" mass="34273">MNFQGLVLTDNCKNQWVVGPLIGKGGFGSIYTTNDNNYVVKIEPKANGSLFTEQAFYTRVLKPSVIEEWKKSHNIKHVGLITCKAFGLYKSINVEYRFLVINRLGADLDAVIRANNNRLPKRSVMLIGIEILNTIQFMHEQGYSHGDIKASNIVLDQIDKNKLYLVDYGLVSKFMSNGEHVPFIRNPNKMDNGTLEFTPIDSHKGYVVSRRGDLETLGYCMIRWLGGILPWTKISETKNCALVSATKQKYVNNTATLLMTSLQYAPRELLQYITMVNSLTYFEEPNYDKFRHILMQGVYY</sequence>
<keyword id="KW-0067">ATP-binding</keyword>
<keyword id="KW-0244">Early protein</keyword>
<keyword id="KW-1035">Host cytoplasm</keyword>
<keyword id="KW-0418">Kinase</keyword>
<keyword id="KW-0460">Magnesium</keyword>
<keyword id="KW-0547">Nucleotide-binding</keyword>
<keyword id="KW-0597">Phosphoprotein</keyword>
<keyword id="KW-0723">Serine/threonine-protein kinase</keyword>
<keyword id="KW-0808">Transferase</keyword>
<keyword id="KW-1188">Viral release from host cell</keyword>
<keyword id="KW-0946">Virion</keyword>